<reference key="1">
    <citation type="submission" date="2002-12" db="EMBL/GenBank/DDBJ databases">
        <title>Complete genome sequence of Vibrio vulnificus CMCP6.</title>
        <authorList>
            <person name="Rhee J.H."/>
            <person name="Kim S.Y."/>
            <person name="Chung S.S."/>
            <person name="Kim J.J."/>
            <person name="Moon Y.H."/>
            <person name="Jeong H."/>
            <person name="Choy H.E."/>
        </authorList>
    </citation>
    <scope>NUCLEOTIDE SEQUENCE [LARGE SCALE GENOMIC DNA]</scope>
    <source>
        <strain>CMCP6</strain>
    </source>
</reference>
<protein>
    <recommendedName>
        <fullName evidence="1">Ribosomal RNA large subunit methyltransferase E</fullName>
        <ecNumber evidence="1">2.1.1.166</ecNumber>
    </recommendedName>
    <alternativeName>
        <fullName evidence="1">23S rRNA Um2552 methyltransferase</fullName>
    </alternativeName>
    <alternativeName>
        <fullName evidence="1">rRNA (uridine-2'-O-)-methyltransferase</fullName>
    </alternativeName>
</protein>
<name>RLME_VIBVU</name>
<sequence length="209" mass="23297">MSKQKHSASSSRWLKEHFDDKYANEARRKGYRSRAIFKLEEIQQKDKLLKPGMTVVDLGAAPGGWSQYAIGVVGDSGRVIACDILPMDSIAGVSFLQGDFREDAVLEALLERIQPDMVDVVMSDMAPNIAGNNSVDQPRAMYLVELALDMCRQVLAPNGSFVVKVFQGEGFDEYVKEVRNMFKVVKIRKPDSSRARSREVFVVATGYKG</sequence>
<evidence type="ECO:0000255" key="1">
    <source>
        <dbReference type="HAMAP-Rule" id="MF_01547"/>
    </source>
</evidence>
<proteinExistence type="inferred from homology"/>
<dbReference type="EC" id="2.1.1.166" evidence="1"/>
<dbReference type="EMBL" id="AE016795">
    <property type="protein sequence ID" value="AAO10105.1"/>
    <property type="molecule type" value="Genomic_DNA"/>
</dbReference>
<dbReference type="RefSeq" id="WP_011079609.1">
    <property type="nucleotide sequence ID" value="NC_004459.3"/>
</dbReference>
<dbReference type="SMR" id="Q8DBW7"/>
<dbReference type="GeneID" id="93895940"/>
<dbReference type="KEGG" id="vvu:VV1_1689"/>
<dbReference type="HOGENOM" id="CLU_009422_4_0_6"/>
<dbReference type="Proteomes" id="UP000002275">
    <property type="component" value="Chromosome 1"/>
</dbReference>
<dbReference type="GO" id="GO:0005737">
    <property type="term" value="C:cytoplasm"/>
    <property type="evidence" value="ECO:0007669"/>
    <property type="project" value="UniProtKB-SubCell"/>
</dbReference>
<dbReference type="GO" id="GO:0008650">
    <property type="term" value="F:rRNA (uridine-2'-O-)-methyltransferase activity"/>
    <property type="evidence" value="ECO:0007669"/>
    <property type="project" value="UniProtKB-UniRule"/>
</dbReference>
<dbReference type="FunFam" id="3.40.50.150:FF:000005">
    <property type="entry name" value="Ribosomal RNA large subunit methyltransferase E"/>
    <property type="match status" value="1"/>
</dbReference>
<dbReference type="Gene3D" id="3.40.50.150">
    <property type="entry name" value="Vaccinia Virus protein VP39"/>
    <property type="match status" value="1"/>
</dbReference>
<dbReference type="HAMAP" id="MF_01547">
    <property type="entry name" value="RNA_methyltr_E"/>
    <property type="match status" value="1"/>
</dbReference>
<dbReference type="InterPro" id="IPR050082">
    <property type="entry name" value="RNA_methyltr_RlmE"/>
</dbReference>
<dbReference type="InterPro" id="IPR002877">
    <property type="entry name" value="RNA_MeTrfase_FtsJ_dom"/>
</dbReference>
<dbReference type="InterPro" id="IPR015507">
    <property type="entry name" value="rRNA-MeTfrase_E"/>
</dbReference>
<dbReference type="InterPro" id="IPR029063">
    <property type="entry name" value="SAM-dependent_MTases_sf"/>
</dbReference>
<dbReference type="NCBIfam" id="NF008390">
    <property type="entry name" value="PRK11188.1"/>
    <property type="match status" value="1"/>
</dbReference>
<dbReference type="PANTHER" id="PTHR10920">
    <property type="entry name" value="RIBOSOMAL RNA METHYLTRANSFERASE"/>
    <property type="match status" value="1"/>
</dbReference>
<dbReference type="PANTHER" id="PTHR10920:SF18">
    <property type="entry name" value="RRNA METHYLTRANSFERASE 2, MITOCHONDRIAL"/>
    <property type="match status" value="1"/>
</dbReference>
<dbReference type="Pfam" id="PF01728">
    <property type="entry name" value="FtsJ"/>
    <property type="match status" value="1"/>
</dbReference>
<dbReference type="PIRSF" id="PIRSF005461">
    <property type="entry name" value="23S_rRNA_mtase"/>
    <property type="match status" value="1"/>
</dbReference>
<dbReference type="SUPFAM" id="SSF53335">
    <property type="entry name" value="S-adenosyl-L-methionine-dependent methyltransferases"/>
    <property type="match status" value="1"/>
</dbReference>
<accession>Q8DBW7</accession>
<comment type="function">
    <text evidence="1">Specifically methylates the uridine in position 2552 of 23S rRNA at the 2'-O position of the ribose in the fully assembled 50S ribosomal subunit.</text>
</comment>
<comment type="catalytic activity">
    <reaction evidence="1">
        <text>uridine(2552) in 23S rRNA + S-adenosyl-L-methionine = 2'-O-methyluridine(2552) in 23S rRNA + S-adenosyl-L-homocysteine + H(+)</text>
        <dbReference type="Rhea" id="RHEA:42720"/>
        <dbReference type="Rhea" id="RHEA-COMP:10202"/>
        <dbReference type="Rhea" id="RHEA-COMP:10203"/>
        <dbReference type="ChEBI" id="CHEBI:15378"/>
        <dbReference type="ChEBI" id="CHEBI:57856"/>
        <dbReference type="ChEBI" id="CHEBI:59789"/>
        <dbReference type="ChEBI" id="CHEBI:65315"/>
        <dbReference type="ChEBI" id="CHEBI:74478"/>
        <dbReference type="EC" id="2.1.1.166"/>
    </reaction>
</comment>
<comment type="subcellular location">
    <subcellularLocation>
        <location evidence="1">Cytoplasm</location>
    </subcellularLocation>
</comment>
<comment type="similarity">
    <text evidence="1">Belongs to the class I-like SAM-binding methyltransferase superfamily. RNA methyltransferase RlmE family.</text>
</comment>
<gene>
    <name evidence="1" type="primary">rlmE</name>
    <name evidence="1" type="synonym">ftsJ</name>
    <name evidence="1" type="synonym">rrmJ</name>
    <name type="ordered locus">VV1_1689</name>
</gene>
<organism>
    <name type="scientific">Vibrio vulnificus (strain CMCP6)</name>
    <dbReference type="NCBI Taxonomy" id="216895"/>
    <lineage>
        <taxon>Bacteria</taxon>
        <taxon>Pseudomonadati</taxon>
        <taxon>Pseudomonadota</taxon>
        <taxon>Gammaproteobacteria</taxon>
        <taxon>Vibrionales</taxon>
        <taxon>Vibrionaceae</taxon>
        <taxon>Vibrio</taxon>
    </lineage>
</organism>
<keyword id="KW-0963">Cytoplasm</keyword>
<keyword id="KW-0489">Methyltransferase</keyword>
<keyword id="KW-0698">rRNA processing</keyword>
<keyword id="KW-0949">S-adenosyl-L-methionine</keyword>
<keyword id="KW-0808">Transferase</keyword>
<feature type="chain" id="PRO_0000155549" description="Ribosomal RNA large subunit methyltransferase E">
    <location>
        <begin position="1"/>
        <end position="209"/>
    </location>
</feature>
<feature type="active site" description="Proton acceptor" evidence="1">
    <location>
        <position position="164"/>
    </location>
</feature>
<feature type="binding site" evidence="1">
    <location>
        <position position="63"/>
    </location>
    <ligand>
        <name>S-adenosyl-L-methionine</name>
        <dbReference type="ChEBI" id="CHEBI:59789"/>
    </ligand>
</feature>
<feature type="binding site" evidence="1">
    <location>
        <position position="65"/>
    </location>
    <ligand>
        <name>S-adenosyl-L-methionine</name>
        <dbReference type="ChEBI" id="CHEBI:59789"/>
    </ligand>
</feature>
<feature type="binding site" evidence="1">
    <location>
        <position position="83"/>
    </location>
    <ligand>
        <name>S-adenosyl-L-methionine</name>
        <dbReference type="ChEBI" id="CHEBI:59789"/>
    </ligand>
</feature>
<feature type="binding site" evidence="1">
    <location>
        <position position="99"/>
    </location>
    <ligand>
        <name>S-adenosyl-L-methionine</name>
        <dbReference type="ChEBI" id="CHEBI:59789"/>
    </ligand>
</feature>
<feature type="binding site" evidence="1">
    <location>
        <position position="124"/>
    </location>
    <ligand>
        <name>S-adenosyl-L-methionine</name>
        <dbReference type="ChEBI" id="CHEBI:59789"/>
    </ligand>
</feature>